<comment type="function">
    <text evidence="1">Catalyzes the isomerization between 2-isopropylmalate and 3-isopropylmalate, via the formation of 2-isopropylmaleate.</text>
</comment>
<comment type="catalytic activity">
    <reaction evidence="1">
        <text>(2R,3S)-3-isopropylmalate = (2S)-2-isopropylmalate</text>
        <dbReference type="Rhea" id="RHEA:32287"/>
        <dbReference type="ChEBI" id="CHEBI:1178"/>
        <dbReference type="ChEBI" id="CHEBI:35121"/>
        <dbReference type="EC" id="4.2.1.33"/>
    </reaction>
</comment>
<comment type="pathway">
    <text evidence="1">Amino-acid biosynthesis; L-leucine biosynthesis; L-leucine from 3-methyl-2-oxobutanoate: step 2/4.</text>
</comment>
<comment type="subunit">
    <text evidence="1">Heterodimer of LeuC and LeuD.</text>
</comment>
<comment type="similarity">
    <text evidence="1">Belongs to the LeuD family. LeuD type 1 subfamily.</text>
</comment>
<organism>
    <name type="scientific">Serratia proteamaculans (strain 568)</name>
    <dbReference type="NCBI Taxonomy" id="399741"/>
    <lineage>
        <taxon>Bacteria</taxon>
        <taxon>Pseudomonadati</taxon>
        <taxon>Pseudomonadota</taxon>
        <taxon>Gammaproteobacteria</taxon>
        <taxon>Enterobacterales</taxon>
        <taxon>Yersiniaceae</taxon>
        <taxon>Serratia</taxon>
    </lineage>
</organism>
<name>LEUD_SERP5</name>
<reference key="1">
    <citation type="submission" date="2007-09" db="EMBL/GenBank/DDBJ databases">
        <title>Complete sequence of chromosome of Serratia proteamaculans 568.</title>
        <authorList>
            <consortium name="US DOE Joint Genome Institute"/>
            <person name="Copeland A."/>
            <person name="Lucas S."/>
            <person name="Lapidus A."/>
            <person name="Barry K."/>
            <person name="Glavina del Rio T."/>
            <person name="Dalin E."/>
            <person name="Tice H."/>
            <person name="Pitluck S."/>
            <person name="Chain P."/>
            <person name="Malfatti S."/>
            <person name="Shin M."/>
            <person name="Vergez L."/>
            <person name="Schmutz J."/>
            <person name="Larimer F."/>
            <person name="Land M."/>
            <person name="Hauser L."/>
            <person name="Kyrpides N."/>
            <person name="Kim E."/>
            <person name="Taghavi S."/>
            <person name="Newman L."/>
            <person name="Vangronsveld J."/>
            <person name="van der Lelie D."/>
            <person name="Richardson P."/>
        </authorList>
    </citation>
    <scope>NUCLEOTIDE SEQUENCE [LARGE SCALE GENOMIC DNA]</scope>
    <source>
        <strain>568</strain>
    </source>
</reference>
<proteinExistence type="inferred from homology"/>
<evidence type="ECO:0000255" key="1">
    <source>
        <dbReference type="HAMAP-Rule" id="MF_01031"/>
    </source>
</evidence>
<sequence>MAKFTQHTGLVVPLDAANVDTDAIIPKQFLQKVTRTGFGKHLFNDWRFLDDAGQQPNPEFVLNKPRYKGASILLARENFGCGSSREHAPWALTDYGFRVVIAPSFADIFYGNSLNNQLLPVKLSEQDVETLFQLVAANEGIEFEVDLENQTVKAGGKSYPFDIDSFRRHCMINGLDSIGLTLQHEADISRYEAQQPAFLN</sequence>
<gene>
    <name evidence="1" type="primary">leuD</name>
    <name type="ordered locus">Spro_0742</name>
</gene>
<protein>
    <recommendedName>
        <fullName evidence="1">3-isopropylmalate dehydratase small subunit</fullName>
        <ecNumber evidence="1">4.2.1.33</ecNumber>
    </recommendedName>
    <alternativeName>
        <fullName evidence="1">Alpha-IPM isomerase</fullName>
        <shortName evidence="1">IPMI</shortName>
    </alternativeName>
    <alternativeName>
        <fullName evidence="1">Isopropylmalate isomerase</fullName>
    </alternativeName>
</protein>
<accession>A8G9Q8</accession>
<keyword id="KW-0028">Amino-acid biosynthesis</keyword>
<keyword id="KW-0100">Branched-chain amino acid biosynthesis</keyword>
<keyword id="KW-0432">Leucine biosynthesis</keyword>
<keyword id="KW-0456">Lyase</keyword>
<feature type="chain" id="PRO_1000063829" description="3-isopropylmalate dehydratase small subunit">
    <location>
        <begin position="1"/>
        <end position="200"/>
    </location>
</feature>
<dbReference type="EC" id="4.2.1.33" evidence="1"/>
<dbReference type="EMBL" id="CP000826">
    <property type="protein sequence ID" value="ABV39848.1"/>
    <property type="molecule type" value="Genomic_DNA"/>
</dbReference>
<dbReference type="SMR" id="A8G9Q8"/>
<dbReference type="STRING" id="399741.Spro_0742"/>
<dbReference type="KEGG" id="spe:Spro_0742"/>
<dbReference type="eggNOG" id="COG0066">
    <property type="taxonomic scope" value="Bacteria"/>
</dbReference>
<dbReference type="HOGENOM" id="CLU_081378_0_3_6"/>
<dbReference type="OrthoDB" id="9777465at2"/>
<dbReference type="UniPathway" id="UPA00048">
    <property type="reaction ID" value="UER00071"/>
</dbReference>
<dbReference type="GO" id="GO:0009316">
    <property type="term" value="C:3-isopropylmalate dehydratase complex"/>
    <property type="evidence" value="ECO:0007669"/>
    <property type="project" value="InterPro"/>
</dbReference>
<dbReference type="GO" id="GO:0003861">
    <property type="term" value="F:3-isopropylmalate dehydratase activity"/>
    <property type="evidence" value="ECO:0007669"/>
    <property type="project" value="UniProtKB-UniRule"/>
</dbReference>
<dbReference type="GO" id="GO:0009098">
    <property type="term" value="P:L-leucine biosynthetic process"/>
    <property type="evidence" value="ECO:0007669"/>
    <property type="project" value="UniProtKB-UniRule"/>
</dbReference>
<dbReference type="CDD" id="cd01577">
    <property type="entry name" value="IPMI_Swivel"/>
    <property type="match status" value="1"/>
</dbReference>
<dbReference type="FunFam" id="3.20.19.10:FF:000003">
    <property type="entry name" value="3-isopropylmalate dehydratase small subunit"/>
    <property type="match status" value="1"/>
</dbReference>
<dbReference type="Gene3D" id="3.20.19.10">
    <property type="entry name" value="Aconitase, domain 4"/>
    <property type="match status" value="1"/>
</dbReference>
<dbReference type="HAMAP" id="MF_01031">
    <property type="entry name" value="LeuD_type1"/>
    <property type="match status" value="1"/>
</dbReference>
<dbReference type="InterPro" id="IPR004431">
    <property type="entry name" value="3-IsopropMal_deHydase_ssu"/>
</dbReference>
<dbReference type="InterPro" id="IPR015928">
    <property type="entry name" value="Aconitase/3IPM_dehydase_swvl"/>
</dbReference>
<dbReference type="InterPro" id="IPR000573">
    <property type="entry name" value="AconitaseA/IPMdHydase_ssu_swvl"/>
</dbReference>
<dbReference type="InterPro" id="IPR033940">
    <property type="entry name" value="IPMI_Swivel"/>
</dbReference>
<dbReference type="InterPro" id="IPR050075">
    <property type="entry name" value="LeuD"/>
</dbReference>
<dbReference type="NCBIfam" id="TIGR00171">
    <property type="entry name" value="leuD"/>
    <property type="match status" value="1"/>
</dbReference>
<dbReference type="NCBIfam" id="NF002458">
    <property type="entry name" value="PRK01641.1"/>
    <property type="match status" value="1"/>
</dbReference>
<dbReference type="PANTHER" id="PTHR43345:SF5">
    <property type="entry name" value="3-ISOPROPYLMALATE DEHYDRATASE SMALL SUBUNIT"/>
    <property type="match status" value="1"/>
</dbReference>
<dbReference type="PANTHER" id="PTHR43345">
    <property type="entry name" value="3-ISOPROPYLMALATE DEHYDRATASE SMALL SUBUNIT 2-RELATED-RELATED"/>
    <property type="match status" value="1"/>
</dbReference>
<dbReference type="Pfam" id="PF00694">
    <property type="entry name" value="Aconitase_C"/>
    <property type="match status" value="1"/>
</dbReference>
<dbReference type="SUPFAM" id="SSF52016">
    <property type="entry name" value="LeuD/IlvD-like"/>
    <property type="match status" value="1"/>
</dbReference>